<keyword id="KW-0004">4Fe-4S</keyword>
<keyword id="KW-0963">Cytoplasm</keyword>
<keyword id="KW-1015">Disulfide bond</keyword>
<keyword id="KW-0408">Iron</keyword>
<keyword id="KW-0411">Iron-sulfur</keyword>
<keyword id="KW-0479">Metal-binding</keyword>
<keyword id="KW-0489">Methyltransferase</keyword>
<keyword id="KW-1185">Reference proteome</keyword>
<keyword id="KW-0698">rRNA processing</keyword>
<keyword id="KW-0949">S-adenosyl-L-methionine</keyword>
<keyword id="KW-0808">Transferase</keyword>
<keyword id="KW-0819">tRNA processing</keyword>
<feature type="chain" id="PRO_0000350314" description="Probable dual-specificity RNA methyltransferase RlmN">
    <location>
        <begin position="1"/>
        <end position="356"/>
    </location>
</feature>
<feature type="domain" description="Radical SAM core" evidence="2">
    <location>
        <begin position="106"/>
        <end position="340"/>
    </location>
</feature>
<feature type="active site" description="Proton acceptor" evidence="1">
    <location>
        <position position="100"/>
    </location>
</feature>
<feature type="active site" description="S-methylcysteine intermediate" evidence="1">
    <location>
        <position position="345"/>
    </location>
</feature>
<feature type="binding site" evidence="1">
    <location>
        <position position="120"/>
    </location>
    <ligand>
        <name>[4Fe-4S] cluster</name>
        <dbReference type="ChEBI" id="CHEBI:49883"/>
        <note>4Fe-4S-S-AdoMet</note>
    </ligand>
</feature>
<feature type="binding site" evidence="1">
    <location>
        <position position="124"/>
    </location>
    <ligand>
        <name>[4Fe-4S] cluster</name>
        <dbReference type="ChEBI" id="CHEBI:49883"/>
        <note>4Fe-4S-S-AdoMet</note>
    </ligand>
</feature>
<feature type="binding site" evidence="1">
    <location>
        <position position="127"/>
    </location>
    <ligand>
        <name>[4Fe-4S] cluster</name>
        <dbReference type="ChEBI" id="CHEBI:49883"/>
        <note>4Fe-4S-S-AdoMet</note>
    </ligand>
</feature>
<feature type="binding site" evidence="1">
    <location>
        <begin position="167"/>
        <end position="168"/>
    </location>
    <ligand>
        <name>S-adenosyl-L-methionine</name>
        <dbReference type="ChEBI" id="CHEBI:59789"/>
    </ligand>
</feature>
<feature type="binding site" evidence="1">
    <location>
        <position position="197"/>
    </location>
    <ligand>
        <name>S-adenosyl-L-methionine</name>
        <dbReference type="ChEBI" id="CHEBI:59789"/>
    </ligand>
</feature>
<feature type="binding site" evidence="1">
    <location>
        <begin position="226"/>
        <end position="228"/>
    </location>
    <ligand>
        <name>S-adenosyl-L-methionine</name>
        <dbReference type="ChEBI" id="CHEBI:59789"/>
    </ligand>
</feature>
<feature type="binding site" evidence="1">
    <location>
        <position position="302"/>
    </location>
    <ligand>
        <name>S-adenosyl-L-methionine</name>
        <dbReference type="ChEBI" id="CHEBI:59789"/>
    </ligand>
</feature>
<feature type="disulfide bond" description="(transient)" evidence="1">
    <location>
        <begin position="113"/>
        <end position="345"/>
    </location>
</feature>
<evidence type="ECO:0000255" key="1">
    <source>
        <dbReference type="HAMAP-Rule" id="MF_01849"/>
    </source>
</evidence>
<evidence type="ECO:0000255" key="2">
    <source>
        <dbReference type="PROSITE-ProRule" id="PRU01266"/>
    </source>
</evidence>
<comment type="function">
    <text evidence="1">Specifically methylates position 2 of adenine 2503 in 23S rRNA and position 2 of adenine 37 in tRNAs.</text>
</comment>
<comment type="catalytic activity">
    <reaction evidence="1">
        <text>adenosine(2503) in 23S rRNA + 2 reduced [2Fe-2S]-[ferredoxin] + 2 S-adenosyl-L-methionine = 2-methyladenosine(2503) in 23S rRNA + 5'-deoxyadenosine + L-methionine + 2 oxidized [2Fe-2S]-[ferredoxin] + S-adenosyl-L-homocysteine</text>
        <dbReference type="Rhea" id="RHEA:42916"/>
        <dbReference type="Rhea" id="RHEA-COMP:10000"/>
        <dbReference type="Rhea" id="RHEA-COMP:10001"/>
        <dbReference type="Rhea" id="RHEA-COMP:10152"/>
        <dbReference type="Rhea" id="RHEA-COMP:10282"/>
        <dbReference type="ChEBI" id="CHEBI:17319"/>
        <dbReference type="ChEBI" id="CHEBI:33737"/>
        <dbReference type="ChEBI" id="CHEBI:33738"/>
        <dbReference type="ChEBI" id="CHEBI:57844"/>
        <dbReference type="ChEBI" id="CHEBI:57856"/>
        <dbReference type="ChEBI" id="CHEBI:59789"/>
        <dbReference type="ChEBI" id="CHEBI:74411"/>
        <dbReference type="ChEBI" id="CHEBI:74497"/>
        <dbReference type="EC" id="2.1.1.192"/>
    </reaction>
</comment>
<comment type="catalytic activity">
    <reaction evidence="1">
        <text>adenosine(37) in tRNA + 2 reduced [2Fe-2S]-[ferredoxin] + 2 S-adenosyl-L-methionine = 2-methyladenosine(37) in tRNA + 5'-deoxyadenosine + L-methionine + 2 oxidized [2Fe-2S]-[ferredoxin] + S-adenosyl-L-homocysteine</text>
        <dbReference type="Rhea" id="RHEA:43332"/>
        <dbReference type="Rhea" id="RHEA-COMP:10000"/>
        <dbReference type="Rhea" id="RHEA-COMP:10001"/>
        <dbReference type="Rhea" id="RHEA-COMP:10162"/>
        <dbReference type="Rhea" id="RHEA-COMP:10485"/>
        <dbReference type="ChEBI" id="CHEBI:17319"/>
        <dbReference type="ChEBI" id="CHEBI:33737"/>
        <dbReference type="ChEBI" id="CHEBI:33738"/>
        <dbReference type="ChEBI" id="CHEBI:57844"/>
        <dbReference type="ChEBI" id="CHEBI:57856"/>
        <dbReference type="ChEBI" id="CHEBI:59789"/>
        <dbReference type="ChEBI" id="CHEBI:74411"/>
        <dbReference type="ChEBI" id="CHEBI:74497"/>
        <dbReference type="EC" id="2.1.1.192"/>
    </reaction>
</comment>
<comment type="cofactor">
    <cofactor evidence="1">
        <name>[4Fe-4S] cluster</name>
        <dbReference type="ChEBI" id="CHEBI:49883"/>
    </cofactor>
    <text evidence="1">Binds 1 [4Fe-4S] cluster. The cluster is coordinated with 3 cysteines and an exchangeable S-adenosyl-L-methionine.</text>
</comment>
<comment type="subcellular location">
    <subcellularLocation>
        <location evidence="1">Cytoplasm</location>
    </subcellularLocation>
</comment>
<comment type="miscellaneous">
    <text evidence="1">Reaction proceeds by a ping-pong mechanism involving intermediate methylation of a conserved cysteine residue.</text>
</comment>
<comment type="similarity">
    <text evidence="1">Belongs to the radical SAM superfamily. RlmN family.</text>
</comment>
<gene>
    <name evidence="1" type="primary">rlmN</name>
    <name type="ordered locus">P9211_16031</name>
</gene>
<protein>
    <recommendedName>
        <fullName evidence="1">Probable dual-specificity RNA methyltransferase RlmN</fullName>
        <ecNumber evidence="1">2.1.1.192</ecNumber>
    </recommendedName>
    <alternativeName>
        <fullName evidence="1">23S rRNA (adenine(2503)-C(2))-methyltransferase</fullName>
    </alternativeName>
    <alternativeName>
        <fullName evidence="1">23S rRNA m2A2503 methyltransferase</fullName>
    </alternativeName>
    <alternativeName>
        <fullName evidence="1">Ribosomal RNA large subunit methyltransferase N</fullName>
    </alternativeName>
    <alternativeName>
        <fullName evidence="1">tRNA (adenine(37)-C(2))-methyltransferase</fullName>
    </alternativeName>
    <alternativeName>
        <fullName evidence="1">tRNA m2A37 methyltransferase</fullName>
    </alternativeName>
</protein>
<name>RLMN_PROM4</name>
<sequence length="356" mass="39721">MNISLLEGKKVVLLGQNVAKLEKLAQEYGEPAFRGRQIHEWLYQKGVRKLEEISVLPKLWRTTLSDQGVCTGRLEEVKRLVANDGTIKLLLETSDRESIEAVGIPTNSRLTTCVSSQVGCSMGCRFCATGKGGFQRSLEVHEIVDQVLSIREAFDRRPSHIVFMGMGEPLLNIESVLESISCLNNDLGIGQRRITVSTVGVVNTLPQLAELALAKLGRVQFTLALSLHAPNQHLREMLVPSAKVYPIQDLLSDCRHYLDITGRRISFEYILLATVNDKVEHAEELADLISGFQSHVNLIAYNPIDEEDYQRPSLARINRFMTVLQSRGVAVSLRASRGLDQDAACGQLRHQHTRLD</sequence>
<proteinExistence type="inferred from homology"/>
<accession>A9BCH2</accession>
<organism>
    <name type="scientific">Prochlorococcus marinus (strain MIT 9211)</name>
    <dbReference type="NCBI Taxonomy" id="93059"/>
    <lineage>
        <taxon>Bacteria</taxon>
        <taxon>Bacillati</taxon>
        <taxon>Cyanobacteriota</taxon>
        <taxon>Cyanophyceae</taxon>
        <taxon>Synechococcales</taxon>
        <taxon>Prochlorococcaceae</taxon>
        <taxon>Prochlorococcus</taxon>
    </lineage>
</organism>
<dbReference type="EC" id="2.1.1.192" evidence="1"/>
<dbReference type="EMBL" id="CP000878">
    <property type="protein sequence ID" value="ABX09534.1"/>
    <property type="molecule type" value="Genomic_DNA"/>
</dbReference>
<dbReference type="RefSeq" id="WP_012196155.1">
    <property type="nucleotide sequence ID" value="NC_009976.1"/>
</dbReference>
<dbReference type="SMR" id="A9BCH2"/>
<dbReference type="STRING" id="93059.P9211_16031"/>
<dbReference type="KEGG" id="pmj:P9211_16031"/>
<dbReference type="eggNOG" id="COG0820">
    <property type="taxonomic scope" value="Bacteria"/>
</dbReference>
<dbReference type="HOGENOM" id="CLU_029101_1_1_3"/>
<dbReference type="OrthoDB" id="9793973at2"/>
<dbReference type="Proteomes" id="UP000000788">
    <property type="component" value="Chromosome"/>
</dbReference>
<dbReference type="GO" id="GO:0005737">
    <property type="term" value="C:cytoplasm"/>
    <property type="evidence" value="ECO:0007669"/>
    <property type="project" value="UniProtKB-SubCell"/>
</dbReference>
<dbReference type="GO" id="GO:0051539">
    <property type="term" value="F:4 iron, 4 sulfur cluster binding"/>
    <property type="evidence" value="ECO:0007669"/>
    <property type="project" value="UniProtKB-UniRule"/>
</dbReference>
<dbReference type="GO" id="GO:0046872">
    <property type="term" value="F:metal ion binding"/>
    <property type="evidence" value="ECO:0007669"/>
    <property type="project" value="UniProtKB-KW"/>
</dbReference>
<dbReference type="GO" id="GO:0070040">
    <property type="term" value="F:rRNA (adenine(2503)-C2-)-methyltransferase activity"/>
    <property type="evidence" value="ECO:0007669"/>
    <property type="project" value="UniProtKB-UniRule"/>
</dbReference>
<dbReference type="GO" id="GO:0019843">
    <property type="term" value="F:rRNA binding"/>
    <property type="evidence" value="ECO:0007669"/>
    <property type="project" value="UniProtKB-UniRule"/>
</dbReference>
<dbReference type="GO" id="GO:0002935">
    <property type="term" value="F:tRNA (adenine(37)-C2)-methyltransferase activity"/>
    <property type="evidence" value="ECO:0007669"/>
    <property type="project" value="UniProtKB-UniRule"/>
</dbReference>
<dbReference type="GO" id="GO:0000049">
    <property type="term" value="F:tRNA binding"/>
    <property type="evidence" value="ECO:0007669"/>
    <property type="project" value="UniProtKB-UniRule"/>
</dbReference>
<dbReference type="GO" id="GO:0070475">
    <property type="term" value="P:rRNA base methylation"/>
    <property type="evidence" value="ECO:0007669"/>
    <property type="project" value="UniProtKB-UniRule"/>
</dbReference>
<dbReference type="GO" id="GO:0030488">
    <property type="term" value="P:tRNA methylation"/>
    <property type="evidence" value="ECO:0007669"/>
    <property type="project" value="UniProtKB-UniRule"/>
</dbReference>
<dbReference type="CDD" id="cd01335">
    <property type="entry name" value="Radical_SAM"/>
    <property type="match status" value="1"/>
</dbReference>
<dbReference type="FunFam" id="3.20.20.70:FF:000014">
    <property type="entry name" value="Probable dual-specificity RNA methyltransferase RlmN"/>
    <property type="match status" value="1"/>
</dbReference>
<dbReference type="Gene3D" id="1.10.150.530">
    <property type="match status" value="1"/>
</dbReference>
<dbReference type="Gene3D" id="3.20.20.70">
    <property type="entry name" value="Aldolase class I"/>
    <property type="match status" value="1"/>
</dbReference>
<dbReference type="HAMAP" id="MF_01849">
    <property type="entry name" value="RNA_methyltr_RlmN"/>
    <property type="match status" value="1"/>
</dbReference>
<dbReference type="InterPro" id="IPR013785">
    <property type="entry name" value="Aldolase_TIM"/>
</dbReference>
<dbReference type="InterPro" id="IPR040072">
    <property type="entry name" value="Methyltransferase_A"/>
</dbReference>
<dbReference type="InterPro" id="IPR048641">
    <property type="entry name" value="RlmN_N"/>
</dbReference>
<dbReference type="InterPro" id="IPR027492">
    <property type="entry name" value="RNA_MTrfase_RlmN"/>
</dbReference>
<dbReference type="InterPro" id="IPR004383">
    <property type="entry name" value="rRNA_lsu_MTrfase_RlmN/Cfr"/>
</dbReference>
<dbReference type="InterPro" id="IPR007197">
    <property type="entry name" value="rSAM"/>
</dbReference>
<dbReference type="NCBIfam" id="TIGR00048">
    <property type="entry name" value="rRNA_mod_RlmN"/>
    <property type="match status" value="1"/>
</dbReference>
<dbReference type="PANTHER" id="PTHR30544">
    <property type="entry name" value="23S RRNA METHYLTRANSFERASE"/>
    <property type="match status" value="1"/>
</dbReference>
<dbReference type="PANTHER" id="PTHR30544:SF5">
    <property type="entry name" value="RADICAL SAM CORE DOMAIN-CONTAINING PROTEIN"/>
    <property type="match status" value="1"/>
</dbReference>
<dbReference type="Pfam" id="PF04055">
    <property type="entry name" value="Radical_SAM"/>
    <property type="match status" value="1"/>
</dbReference>
<dbReference type="Pfam" id="PF21016">
    <property type="entry name" value="RlmN_N"/>
    <property type="match status" value="1"/>
</dbReference>
<dbReference type="PIRSF" id="PIRSF006004">
    <property type="entry name" value="CHP00048"/>
    <property type="match status" value="1"/>
</dbReference>
<dbReference type="SFLD" id="SFLDF00275">
    <property type="entry name" value="adenosine_C2_methyltransferase"/>
    <property type="match status" value="1"/>
</dbReference>
<dbReference type="SFLD" id="SFLDS00029">
    <property type="entry name" value="Radical_SAM"/>
    <property type="match status" value="1"/>
</dbReference>
<dbReference type="SUPFAM" id="SSF102114">
    <property type="entry name" value="Radical SAM enzymes"/>
    <property type="match status" value="1"/>
</dbReference>
<dbReference type="PROSITE" id="PS51918">
    <property type="entry name" value="RADICAL_SAM"/>
    <property type="match status" value="1"/>
</dbReference>
<reference key="1">
    <citation type="journal article" date="2007" name="PLoS Genet.">
        <title>Patterns and implications of gene gain and loss in the evolution of Prochlorococcus.</title>
        <authorList>
            <person name="Kettler G.C."/>
            <person name="Martiny A.C."/>
            <person name="Huang K."/>
            <person name="Zucker J."/>
            <person name="Coleman M.L."/>
            <person name="Rodrigue S."/>
            <person name="Chen F."/>
            <person name="Lapidus A."/>
            <person name="Ferriera S."/>
            <person name="Johnson J."/>
            <person name="Steglich C."/>
            <person name="Church G.M."/>
            <person name="Richardson P."/>
            <person name="Chisholm S.W."/>
        </authorList>
    </citation>
    <scope>NUCLEOTIDE SEQUENCE [LARGE SCALE GENOMIC DNA]</scope>
    <source>
        <strain>MIT 9211</strain>
    </source>
</reference>